<reference key="1">
    <citation type="journal article" date="2011" name="J. Bacteriol.">
        <title>Comparative genomics of 28 Salmonella enterica isolates: evidence for CRISPR-mediated adaptive sublineage evolution.</title>
        <authorList>
            <person name="Fricke W.F."/>
            <person name="Mammel M.K."/>
            <person name="McDermott P.F."/>
            <person name="Tartera C."/>
            <person name="White D.G."/>
            <person name="Leclerc J.E."/>
            <person name="Ravel J."/>
            <person name="Cebula T.A."/>
        </authorList>
    </citation>
    <scope>NUCLEOTIDE SEQUENCE [LARGE SCALE GENOMIC DNA]</scope>
    <source>
        <strain>SL483</strain>
    </source>
</reference>
<feature type="chain" id="PRO_1000091354" description="Leucine--tRNA ligase">
    <location>
        <begin position="1"/>
        <end position="860"/>
    </location>
</feature>
<feature type="short sequence motif" description="'HIGH' region">
    <location>
        <begin position="42"/>
        <end position="52"/>
    </location>
</feature>
<feature type="short sequence motif" description="'KMSKS' region">
    <location>
        <begin position="619"/>
        <end position="623"/>
    </location>
</feature>
<feature type="binding site" evidence="1">
    <location>
        <position position="622"/>
    </location>
    <ligand>
        <name>ATP</name>
        <dbReference type="ChEBI" id="CHEBI:30616"/>
    </ligand>
</feature>
<organism>
    <name type="scientific">Salmonella agona (strain SL483)</name>
    <dbReference type="NCBI Taxonomy" id="454166"/>
    <lineage>
        <taxon>Bacteria</taxon>
        <taxon>Pseudomonadati</taxon>
        <taxon>Pseudomonadota</taxon>
        <taxon>Gammaproteobacteria</taxon>
        <taxon>Enterobacterales</taxon>
        <taxon>Enterobacteriaceae</taxon>
        <taxon>Salmonella</taxon>
    </lineage>
</organism>
<comment type="catalytic activity">
    <reaction evidence="1">
        <text>tRNA(Leu) + L-leucine + ATP = L-leucyl-tRNA(Leu) + AMP + diphosphate</text>
        <dbReference type="Rhea" id="RHEA:11688"/>
        <dbReference type="Rhea" id="RHEA-COMP:9613"/>
        <dbReference type="Rhea" id="RHEA-COMP:9622"/>
        <dbReference type="ChEBI" id="CHEBI:30616"/>
        <dbReference type="ChEBI" id="CHEBI:33019"/>
        <dbReference type="ChEBI" id="CHEBI:57427"/>
        <dbReference type="ChEBI" id="CHEBI:78442"/>
        <dbReference type="ChEBI" id="CHEBI:78494"/>
        <dbReference type="ChEBI" id="CHEBI:456215"/>
        <dbReference type="EC" id="6.1.1.4"/>
    </reaction>
</comment>
<comment type="subcellular location">
    <subcellularLocation>
        <location evidence="1">Cytoplasm</location>
    </subcellularLocation>
</comment>
<comment type="similarity">
    <text evidence="1">Belongs to the class-I aminoacyl-tRNA synthetase family.</text>
</comment>
<protein>
    <recommendedName>
        <fullName evidence="1">Leucine--tRNA ligase</fullName>
        <ecNumber evidence="1">6.1.1.4</ecNumber>
    </recommendedName>
    <alternativeName>
        <fullName evidence="1">Leucyl-tRNA synthetase</fullName>
        <shortName evidence="1">LeuRS</shortName>
    </alternativeName>
</protein>
<gene>
    <name evidence="1" type="primary">leuS</name>
    <name type="ordered locus">SeAg_B0691</name>
</gene>
<accession>B5EZ89</accession>
<sequence length="860" mass="96959">MQEQYRPEEIESKVQLHWDEKRTFEVTEDESKEKYYCLSMLPYPSGRLHMGHVRNYTIGDVVARYQRMLGKNVLQPIGWDAFGLPAEGAAVKNNTAPAPWTYDNIAYMKNQLKTLGFGYDWSREIATCTPEYYRWEQKFFTELYKKGLVYKKTSAVNWCPNDQTVLANEQVIDGCCWRCDTKVERKEIPQWFIKITAYADELLRDLDKLDHWPDTVKTMQRNWIGRSEGVEITFDVKGYDNTLTVYTTRPDTFMGATYLAVAAGHPLAQKAAANNAELAAFIDECRNTKVAEAEMATMEKKGVDTGYKAIHPLTGEEIPVWAANFVLMEYGTGAVMAVPGHDQRDYEFASKYGLTIKPVILAADGSEPDLSEQALTEKGVLFNSGEFDGLAFEAAFNAIADKLAEKGVGERKVNYRLRDWGVSRQRYWGAPIPMVTLEDGTVLPTPEDQLPVILPEDVVMDGITSPIKADPEWAKTTVNGMPALRETDTFDTFMESSWYYARYTCPQYQEGMLDSKAANYWLPVDIYIGGIEHAIMHLLYFRFFHKLMRDAGMVTSDEPAKQLLCQGMVLADAFYYVGENGERNWVSPVDAIVERDEKGRIVKAKDAAGHELVYTGMSKMSKSKNNGIDPQVMVERYGADTVRLFMMFASPADMTLEWQESGVEGANRFIKRVWKLVYEHTAKGPVAALNVDALSEDQKALRRDVHKTIAKVTDDIGRRQTFNTAIAAIMELMNKLAKAPQEGEQDRALLQEALQAVVRMLNPFTPHVCFTLWQELGGEGDIDNAPWPVADEQAMVENTTLVVVQVNGKVRGKITVAVDATEEQVRERAGQEHLVAKYLDGVTVRKVIYVPGKLLNLVVG</sequence>
<proteinExistence type="inferred from homology"/>
<dbReference type="EC" id="6.1.1.4" evidence="1"/>
<dbReference type="EMBL" id="CP001138">
    <property type="protein sequence ID" value="ACH52062.1"/>
    <property type="molecule type" value="Genomic_DNA"/>
</dbReference>
<dbReference type="RefSeq" id="WP_001157916.1">
    <property type="nucleotide sequence ID" value="NC_011149.1"/>
</dbReference>
<dbReference type="SMR" id="B5EZ89"/>
<dbReference type="KEGG" id="sea:SeAg_B0691"/>
<dbReference type="HOGENOM" id="CLU_004427_0_0_6"/>
<dbReference type="Proteomes" id="UP000008819">
    <property type="component" value="Chromosome"/>
</dbReference>
<dbReference type="GO" id="GO:0005829">
    <property type="term" value="C:cytosol"/>
    <property type="evidence" value="ECO:0007669"/>
    <property type="project" value="TreeGrafter"/>
</dbReference>
<dbReference type="GO" id="GO:0002161">
    <property type="term" value="F:aminoacyl-tRNA deacylase activity"/>
    <property type="evidence" value="ECO:0007669"/>
    <property type="project" value="InterPro"/>
</dbReference>
<dbReference type="GO" id="GO:0005524">
    <property type="term" value="F:ATP binding"/>
    <property type="evidence" value="ECO:0007669"/>
    <property type="project" value="UniProtKB-UniRule"/>
</dbReference>
<dbReference type="GO" id="GO:0004823">
    <property type="term" value="F:leucine-tRNA ligase activity"/>
    <property type="evidence" value="ECO:0007669"/>
    <property type="project" value="UniProtKB-UniRule"/>
</dbReference>
<dbReference type="GO" id="GO:0006429">
    <property type="term" value="P:leucyl-tRNA aminoacylation"/>
    <property type="evidence" value="ECO:0007669"/>
    <property type="project" value="UniProtKB-UniRule"/>
</dbReference>
<dbReference type="CDD" id="cd07958">
    <property type="entry name" value="Anticodon_Ia_Leu_BEm"/>
    <property type="match status" value="1"/>
</dbReference>
<dbReference type="CDD" id="cd00812">
    <property type="entry name" value="LeuRS_core"/>
    <property type="match status" value="1"/>
</dbReference>
<dbReference type="FunFam" id="1.10.730.10:FF:000002">
    <property type="entry name" value="Leucine--tRNA ligase"/>
    <property type="match status" value="2"/>
</dbReference>
<dbReference type="FunFam" id="2.20.28.290:FF:000001">
    <property type="entry name" value="Leucine--tRNA ligase"/>
    <property type="match status" value="1"/>
</dbReference>
<dbReference type="FunFam" id="3.10.20.590:FF:000001">
    <property type="entry name" value="Leucine--tRNA ligase"/>
    <property type="match status" value="1"/>
</dbReference>
<dbReference type="FunFam" id="3.40.50.620:FF:000003">
    <property type="entry name" value="Leucine--tRNA ligase"/>
    <property type="match status" value="1"/>
</dbReference>
<dbReference type="FunFam" id="3.40.50.620:FF:000124">
    <property type="entry name" value="Leucine--tRNA ligase"/>
    <property type="match status" value="1"/>
</dbReference>
<dbReference type="FunFam" id="3.90.740.10:FF:000012">
    <property type="entry name" value="Leucine--tRNA ligase"/>
    <property type="match status" value="1"/>
</dbReference>
<dbReference type="Gene3D" id="2.20.28.290">
    <property type="match status" value="1"/>
</dbReference>
<dbReference type="Gene3D" id="3.10.20.590">
    <property type="match status" value="1"/>
</dbReference>
<dbReference type="Gene3D" id="3.40.50.620">
    <property type="entry name" value="HUPs"/>
    <property type="match status" value="2"/>
</dbReference>
<dbReference type="Gene3D" id="1.10.730.10">
    <property type="entry name" value="Isoleucyl-tRNA Synthetase, Domain 1"/>
    <property type="match status" value="2"/>
</dbReference>
<dbReference type="HAMAP" id="MF_00049_B">
    <property type="entry name" value="Leu_tRNA_synth_B"/>
    <property type="match status" value="1"/>
</dbReference>
<dbReference type="InterPro" id="IPR001412">
    <property type="entry name" value="aa-tRNA-synth_I_CS"/>
</dbReference>
<dbReference type="InterPro" id="IPR002300">
    <property type="entry name" value="aa-tRNA-synth_Ia"/>
</dbReference>
<dbReference type="InterPro" id="IPR002302">
    <property type="entry name" value="Leu-tRNA-ligase"/>
</dbReference>
<dbReference type="InterPro" id="IPR025709">
    <property type="entry name" value="Leu_tRNA-synth_edit"/>
</dbReference>
<dbReference type="InterPro" id="IPR013155">
    <property type="entry name" value="M/V/L/I-tRNA-synth_anticd-bd"/>
</dbReference>
<dbReference type="InterPro" id="IPR015413">
    <property type="entry name" value="Methionyl/Leucyl_tRNA_Synth"/>
</dbReference>
<dbReference type="InterPro" id="IPR014729">
    <property type="entry name" value="Rossmann-like_a/b/a_fold"/>
</dbReference>
<dbReference type="InterPro" id="IPR009080">
    <property type="entry name" value="tRNAsynth_Ia_anticodon-bd"/>
</dbReference>
<dbReference type="InterPro" id="IPR009008">
    <property type="entry name" value="Val/Leu/Ile-tRNA-synth_edit"/>
</dbReference>
<dbReference type="NCBIfam" id="TIGR00396">
    <property type="entry name" value="leuS_bact"/>
    <property type="match status" value="1"/>
</dbReference>
<dbReference type="PANTHER" id="PTHR43740:SF2">
    <property type="entry name" value="LEUCINE--TRNA LIGASE, MITOCHONDRIAL"/>
    <property type="match status" value="1"/>
</dbReference>
<dbReference type="PANTHER" id="PTHR43740">
    <property type="entry name" value="LEUCYL-TRNA SYNTHETASE"/>
    <property type="match status" value="1"/>
</dbReference>
<dbReference type="Pfam" id="PF08264">
    <property type="entry name" value="Anticodon_1"/>
    <property type="match status" value="1"/>
</dbReference>
<dbReference type="Pfam" id="PF00133">
    <property type="entry name" value="tRNA-synt_1"/>
    <property type="match status" value="2"/>
</dbReference>
<dbReference type="Pfam" id="PF13603">
    <property type="entry name" value="tRNA-synt_1_2"/>
    <property type="match status" value="1"/>
</dbReference>
<dbReference type="Pfam" id="PF09334">
    <property type="entry name" value="tRNA-synt_1g"/>
    <property type="match status" value="1"/>
</dbReference>
<dbReference type="PRINTS" id="PR00985">
    <property type="entry name" value="TRNASYNTHLEU"/>
</dbReference>
<dbReference type="SUPFAM" id="SSF47323">
    <property type="entry name" value="Anticodon-binding domain of a subclass of class I aminoacyl-tRNA synthetases"/>
    <property type="match status" value="1"/>
</dbReference>
<dbReference type="SUPFAM" id="SSF52374">
    <property type="entry name" value="Nucleotidylyl transferase"/>
    <property type="match status" value="1"/>
</dbReference>
<dbReference type="SUPFAM" id="SSF50677">
    <property type="entry name" value="ValRS/IleRS/LeuRS editing domain"/>
    <property type="match status" value="1"/>
</dbReference>
<dbReference type="PROSITE" id="PS00178">
    <property type="entry name" value="AA_TRNA_LIGASE_I"/>
    <property type="match status" value="1"/>
</dbReference>
<evidence type="ECO:0000255" key="1">
    <source>
        <dbReference type="HAMAP-Rule" id="MF_00049"/>
    </source>
</evidence>
<keyword id="KW-0030">Aminoacyl-tRNA synthetase</keyword>
<keyword id="KW-0067">ATP-binding</keyword>
<keyword id="KW-0963">Cytoplasm</keyword>
<keyword id="KW-0436">Ligase</keyword>
<keyword id="KW-0547">Nucleotide-binding</keyword>
<keyword id="KW-0648">Protein biosynthesis</keyword>
<name>SYL_SALA4</name>